<feature type="chain" id="PRO_0000188725" description="1,4-alpha-glucan branching enzyme GlgB">
    <location>
        <begin position="1"/>
        <end position="716"/>
    </location>
</feature>
<feature type="active site" description="Nucleophile" evidence="1">
    <location>
        <position position="394"/>
    </location>
</feature>
<feature type="active site" description="Proton donor" evidence="1">
    <location>
        <position position="447"/>
    </location>
</feature>
<accession>Q6LHN1</accession>
<proteinExistence type="inferred from homology"/>
<protein>
    <recommendedName>
        <fullName evidence="1">1,4-alpha-glucan branching enzyme GlgB</fullName>
        <ecNumber evidence="1">2.4.1.18</ecNumber>
    </recommendedName>
    <alternativeName>
        <fullName evidence="1">1,4-alpha-D-glucan:1,4-alpha-D-glucan 6-glucosyl-transferase</fullName>
    </alternativeName>
    <alternativeName>
        <fullName evidence="1">Alpha-(1-&gt;4)-glucan branching enzyme</fullName>
    </alternativeName>
    <alternativeName>
        <fullName evidence="1">Glycogen branching enzyme</fullName>
        <shortName evidence="1">BE</shortName>
    </alternativeName>
</protein>
<name>GLGB_PHOPR</name>
<comment type="function">
    <text evidence="1">Catalyzes the formation of the alpha-1,6-glucosidic linkages in glycogen by scission of a 1,4-alpha-linked oligosaccharide from growing alpha-1,4-glucan chains and the subsequent attachment of the oligosaccharide to the alpha-1,6 position.</text>
</comment>
<comment type="catalytic activity">
    <reaction evidence="1">
        <text>Transfers a segment of a (1-&gt;4)-alpha-D-glucan chain to a primary hydroxy group in a similar glucan chain.</text>
        <dbReference type="EC" id="2.4.1.18"/>
    </reaction>
</comment>
<comment type="pathway">
    <text evidence="1">Glycan biosynthesis; glycogen biosynthesis.</text>
</comment>
<comment type="subunit">
    <text evidence="1">Monomer.</text>
</comment>
<comment type="similarity">
    <text evidence="1">Belongs to the glycosyl hydrolase 13 family. GlgB subfamily.</text>
</comment>
<gene>
    <name evidence="1" type="primary">glgB</name>
    <name type="ordered locus">PBPRB1328</name>
</gene>
<sequence length="716" mass="81846">MQLERAAFSDPFSFLGPQYQSKGIALRVWMPGAVSMVVEIENGEKFPLTREDESGFVLISKMDLTAAVYKLHISWPTGEQTIHDPYQFHGFMPSGDALVSPSKMHSEMGAQLISLNKGGQPISGVRFLTYAPNASAVSVIGEFNAWDGRRHPMQRLDDGLWGLFIPDLEDGTQYKFELKDSSGNSLPHKADPWGYSSEQYPSFTSIVYDQSRYQWQDKAWQTRPVSVKHQEALSFYELHAGSWRRNEQGDFLTYRELAEQLIPYLSEMGYTHLELMPVSEHPFYGSWGYQPIGLFSPTSRFGTPDDFKYFVDQCHLAGIGVVLDWVPAHFPSDDHGLANFDGTALFNDPDPRRGWHQDWKSYIYDYGRDHVRRFLISNALFWLEHYHIDGLRVDAVASMLYLDYSREHDQWIPNHDGGNQNYDAISLLRWMNEEVYSHYPNAMTIAEESTAFSGVSRPTDMGGLGFGFKWNMGWMHDSLSYIQEEPVHRKFHHNTITFPLIYAFSENYVLSLSHDEVVYGKGSLLDKMPGDEWQKSANLRTYMGYMYGQPGKKLNFMGAEIAQSAEWSHDGQLEWHWLEYPRHNGMKKLVSDLNHLYQDLPALHELDCSPEGFEWRVQDDAETSVLAHERFALNGDKVLVVSNFTPVPREGYTLGVPAEGEYEVLLNTDAEKYWGSGTPIQQTVKTQLLEKHGLAQSISLDLPPLSTVFLAFKQHA</sequence>
<evidence type="ECO:0000255" key="1">
    <source>
        <dbReference type="HAMAP-Rule" id="MF_00685"/>
    </source>
</evidence>
<dbReference type="EC" id="2.4.1.18" evidence="1"/>
<dbReference type="EMBL" id="CR378679">
    <property type="protein sequence ID" value="CAG23199.1"/>
    <property type="molecule type" value="Genomic_DNA"/>
</dbReference>
<dbReference type="RefSeq" id="WP_011221380.1">
    <property type="nucleotide sequence ID" value="NC_006371.1"/>
</dbReference>
<dbReference type="SMR" id="Q6LHN1"/>
<dbReference type="STRING" id="298386.PBPRB1328"/>
<dbReference type="CAZy" id="CBM48">
    <property type="family name" value="Carbohydrate-Binding Module Family 48"/>
</dbReference>
<dbReference type="CAZy" id="GH13">
    <property type="family name" value="Glycoside Hydrolase Family 13"/>
</dbReference>
<dbReference type="KEGG" id="ppr:PBPRB1328"/>
<dbReference type="eggNOG" id="COG0296">
    <property type="taxonomic scope" value="Bacteria"/>
</dbReference>
<dbReference type="HOGENOM" id="CLU_004245_3_2_6"/>
<dbReference type="UniPathway" id="UPA00164"/>
<dbReference type="Proteomes" id="UP000000593">
    <property type="component" value="Chromosome 2"/>
</dbReference>
<dbReference type="GO" id="GO:0005829">
    <property type="term" value="C:cytosol"/>
    <property type="evidence" value="ECO:0007669"/>
    <property type="project" value="TreeGrafter"/>
</dbReference>
<dbReference type="GO" id="GO:0003844">
    <property type="term" value="F:1,4-alpha-glucan branching enzyme activity"/>
    <property type="evidence" value="ECO:0007669"/>
    <property type="project" value="UniProtKB-UniRule"/>
</dbReference>
<dbReference type="GO" id="GO:0043169">
    <property type="term" value="F:cation binding"/>
    <property type="evidence" value="ECO:0007669"/>
    <property type="project" value="InterPro"/>
</dbReference>
<dbReference type="GO" id="GO:0004553">
    <property type="term" value="F:hydrolase activity, hydrolyzing O-glycosyl compounds"/>
    <property type="evidence" value="ECO:0007669"/>
    <property type="project" value="InterPro"/>
</dbReference>
<dbReference type="GO" id="GO:0005978">
    <property type="term" value="P:glycogen biosynthetic process"/>
    <property type="evidence" value="ECO:0007669"/>
    <property type="project" value="UniProtKB-UniRule"/>
</dbReference>
<dbReference type="CDD" id="cd11322">
    <property type="entry name" value="AmyAc_Glg_BE"/>
    <property type="match status" value="1"/>
</dbReference>
<dbReference type="CDD" id="cd02855">
    <property type="entry name" value="E_set_GBE_prok_N"/>
    <property type="match status" value="1"/>
</dbReference>
<dbReference type="FunFam" id="2.60.40.1180:FF:000002">
    <property type="entry name" value="1,4-alpha-glucan branching enzyme GlgB"/>
    <property type="match status" value="1"/>
</dbReference>
<dbReference type="FunFam" id="3.20.20.80:FF:000003">
    <property type="entry name" value="1,4-alpha-glucan branching enzyme GlgB"/>
    <property type="match status" value="1"/>
</dbReference>
<dbReference type="Gene3D" id="3.20.20.80">
    <property type="entry name" value="Glycosidases"/>
    <property type="match status" value="1"/>
</dbReference>
<dbReference type="Gene3D" id="2.60.40.1180">
    <property type="entry name" value="Golgi alpha-mannosidase II"/>
    <property type="match status" value="1"/>
</dbReference>
<dbReference type="Gene3D" id="2.60.40.10">
    <property type="entry name" value="Immunoglobulins"/>
    <property type="match status" value="2"/>
</dbReference>
<dbReference type="HAMAP" id="MF_00685">
    <property type="entry name" value="GlgB"/>
    <property type="match status" value="1"/>
</dbReference>
<dbReference type="InterPro" id="IPR006048">
    <property type="entry name" value="A-amylase/branching_C"/>
</dbReference>
<dbReference type="InterPro" id="IPR037439">
    <property type="entry name" value="Branching_enzy"/>
</dbReference>
<dbReference type="InterPro" id="IPR006407">
    <property type="entry name" value="GlgB"/>
</dbReference>
<dbReference type="InterPro" id="IPR054169">
    <property type="entry name" value="GlgB_N"/>
</dbReference>
<dbReference type="InterPro" id="IPR044143">
    <property type="entry name" value="GlgB_N_E_set_prok"/>
</dbReference>
<dbReference type="InterPro" id="IPR006047">
    <property type="entry name" value="Glyco_hydro_13_cat_dom"/>
</dbReference>
<dbReference type="InterPro" id="IPR004193">
    <property type="entry name" value="Glyco_hydro_13_N"/>
</dbReference>
<dbReference type="InterPro" id="IPR013780">
    <property type="entry name" value="Glyco_hydro_b"/>
</dbReference>
<dbReference type="InterPro" id="IPR017853">
    <property type="entry name" value="Glycoside_hydrolase_SF"/>
</dbReference>
<dbReference type="InterPro" id="IPR013783">
    <property type="entry name" value="Ig-like_fold"/>
</dbReference>
<dbReference type="InterPro" id="IPR014756">
    <property type="entry name" value="Ig_E-set"/>
</dbReference>
<dbReference type="NCBIfam" id="TIGR01515">
    <property type="entry name" value="branching_enzym"/>
    <property type="match status" value="1"/>
</dbReference>
<dbReference type="NCBIfam" id="NF003811">
    <property type="entry name" value="PRK05402.1"/>
    <property type="match status" value="1"/>
</dbReference>
<dbReference type="NCBIfam" id="NF008967">
    <property type="entry name" value="PRK12313.1"/>
    <property type="match status" value="1"/>
</dbReference>
<dbReference type="PANTHER" id="PTHR43651">
    <property type="entry name" value="1,4-ALPHA-GLUCAN-BRANCHING ENZYME"/>
    <property type="match status" value="1"/>
</dbReference>
<dbReference type="PANTHER" id="PTHR43651:SF3">
    <property type="entry name" value="1,4-ALPHA-GLUCAN-BRANCHING ENZYME"/>
    <property type="match status" value="1"/>
</dbReference>
<dbReference type="Pfam" id="PF00128">
    <property type="entry name" value="Alpha-amylase"/>
    <property type="match status" value="1"/>
</dbReference>
<dbReference type="Pfam" id="PF02806">
    <property type="entry name" value="Alpha-amylase_C"/>
    <property type="match status" value="1"/>
</dbReference>
<dbReference type="Pfam" id="PF02922">
    <property type="entry name" value="CBM_48"/>
    <property type="match status" value="1"/>
</dbReference>
<dbReference type="Pfam" id="PF22019">
    <property type="entry name" value="GlgB_N"/>
    <property type="match status" value="1"/>
</dbReference>
<dbReference type="PIRSF" id="PIRSF000463">
    <property type="entry name" value="GlgB"/>
    <property type="match status" value="1"/>
</dbReference>
<dbReference type="SMART" id="SM00642">
    <property type="entry name" value="Aamy"/>
    <property type="match status" value="1"/>
</dbReference>
<dbReference type="SUPFAM" id="SSF51445">
    <property type="entry name" value="(Trans)glycosidases"/>
    <property type="match status" value="1"/>
</dbReference>
<dbReference type="SUPFAM" id="SSF81296">
    <property type="entry name" value="E set domains"/>
    <property type="match status" value="2"/>
</dbReference>
<dbReference type="SUPFAM" id="SSF51011">
    <property type="entry name" value="Glycosyl hydrolase domain"/>
    <property type="match status" value="1"/>
</dbReference>
<reference key="1">
    <citation type="journal article" date="2005" name="Science">
        <title>Life at depth: Photobacterium profundum genome sequence and expression analysis.</title>
        <authorList>
            <person name="Vezzi A."/>
            <person name="Campanaro S."/>
            <person name="D'Angelo M."/>
            <person name="Simonato F."/>
            <person name="Vitulo N."/>
            <person name="Lauro F.M."/>
            <person name="Cestaro A."/>
            <person name="Malacrida G."/>
            <person name="Simionati B."/>
            <person name="Cannata N."/>
            <person name="Romualdi C."/>
            <person name="Bartlett D.H."/>
            <person name="Valle G."/>
        </authorList>
    </citation>
    <scope>NUCLEOTIDE SEQUENCE [LARGE SCALE GENOMIC DNA]</scope>
    <source>
        <strain>ATCC BAA-1253 / SS9</strain>
    </source>
</reference>
<keyword id="KW-0119">Carbohydrate metabolism</keyword>
<keyword id="KW-0320">Glycogen biosynthesis</keyword>
<keyword id="KW-0321">Glycogen metabolism</keyword>
<keyword id="KW-0328">Glycosyltransferase</keyword>
<keyword id="KW-1185">Reference proteome</keyword>
<keyword id="KW-0808">Transferase</keyword>
<organism>
    <name type="scientific">Photobacterium profundum (strain SS9)</name>
    <dbReference type="NCBI Taxonomy" id="298386"/>
    <lineage>
        <taxon>Bacteria</taxon>
        <taxon>Pseudomonadati</taxon>
        <taxon>Pseudomonadota</taxon>
        <taxon>Gammaproteobacteria</taxon>
        <taxon>Vibrionales</taxon>
        <taxon>Vibrionaceae</taxon>
        <taxon>Photobacterium</taxon>
    </lineage>
</organism>